<accession>B6K412</accession>
<proteinExistence type="evidence at protein level"/>
<reference key="1">
    <citation type="journal article" date="2011" name="Science">
        <title>Comparative functional genomics of the fission yeasts.</title>
        <authorList>
            <person name="Rhind N."/>
            <person name="Chen Z."/>
            <person name="Yassour M."/>
            <person name="Thompson D.A."/>
            <person name="Haas B.J."/>
            <person name="Habib N."/>
            <person name="Wapinski I."/>
            <person name="Roy S."/>
            <person name="Lin M.F."/>
            <person name="Heiman D.I."/>
            <person name="Young S.K."/>
            <person name="Furuya K."/>
            <person name="Guo Y."/>
            <person name="Pidoux A."/>
            <person name="Chen H.M."/>
            <person name="Robbertse B."/>
            <person name="Goldberg J.M."/>
            <person name="Aoki K."/>
            <person name="Bayne E.H."/>
            <person name="Berlin A.M."/>
            <person name="Desjardins C.A."/>
            <person name="Dobbs E."/>
            <person name="Dukaj L."/>
            <person name="Fan L."/>
            <person name="FitzGerald M.G."/>
            <person name="French C."/>
            <person name="Gujja S."/>
            <person name="Hansen K."/>
            <person name="Keifenheim D."/>
            <person name="Levin J.Z."/>
            <person name="Mosher R.A."/>
            <person name="Mueller C.A."/>
            <person name="Pfiffner J."/>
            <person name="Priest M."/>
            <person name="Russ C."/>
            <person name="Smialowska A."/>
            <person name="Swoboda P."/>
            <person name="Sykes S.M."/>
            <person name="Vaughn M."/>
            <person name="Vengrova S."/>
            <person name="Yoder R."/>
            <person name="Zeng Q."/>
            <person name="Allshire R."/>
            <person name="Baulcombe D."/>
            <person name="Birren B.W."/>
            <person name="Brown W."/>
            <person name="Ekwall K."/>
            <person name="Kellis M."/>
            <person name="Leatherwood J."/>
            <person name="Levin H."/>
            <person name="Margalit H."/>
            <person name="Martienssen R."/>
            <person name="Nieduszynski C.A."/>
            <person name="Spatafora J.W."/>
            <person name="Friedman N."/>
            <person name="Dalgaard J.Z."/>
            <person name="Baumann P."/>
            <person name="Niki H."/>
            <person name="Regev A."/>
            <person name="Nusbaum C."/>
        </authorList>
    </citation>
    <scope>NUCLEOTIDE SEQUENCE [LARGE SCALE GENOMIC DNA]</scope>
    <source>
        <strain>yFS275 / FY16936</strain>
    </source>
</reference>
<reference key="2">
    <citation type="journal article" date="2021" name="Proc. Natl. Acad. Sci. U.S.A.">
        <title>A squalene-hopene cyclase in Schizosaccharomyces japonicus represents a eukaryotic adaptation to sterol-limited anaerobic environments.</title>
        <authorList>
            <person name="Bouwknegt J."/>
            <person name="Wiersma S.J."/>
            <person name="Ortiz-Merino R.A."/>
            <person name="Doornenbal E.S.R."/>
            <person name="Buitenhuis P."/>
            <person name="Giera M."/>
            <person name="Mueller C."/>
            <person name="Pronk J.T."/>
        </authorList>
    </citation>
    <scope>FUNCTION</scope>
    <scope>BIOTECHNOLOGY</scope>
</reference>
<feature type="chain" id="PRO_0000455302" description="Squalene-hopene cyclase">
    <location>
        <begin position="1"/>
        <end position="656"/>
    </location>
</feature>
<feature type="repeat" description="PFTB 1" evidence="2">
    <location>
        <begin position="68"/>
        <end position="110"/>
    </location>
</feature>
<feature type="repeat" description="PFTB 2" evidence="2">
    <location>
        <begin position="417"/>
        <end position="459"/>
    </location>
</feature>
<feature type="repeat" description="PFTB 3" evidence="2">
    <location>
        <begin position="485"/>
        <end position="525"/>
    </location>
</feature>
<feature type="repeat" description="PFTB 4" evidence="2">
    <location>
        <begin position="533"/>
        <end position="582"/>
    </location>
</feature>
<feature type="repeat" description="PFTB 5" evidence="2">
    <location>
        <begin position="591"/>
        <end position="634"/>
    </location>
</feature>
<feature type="active site" description="Proton donor" evidence="1">
    <location>
        <position position="396"/>
    </location>
</feature>
<feature type="site" description="Transition state stabilizer" evidence="1">
    <location>
        <position position="324"/>
    </location>
</feature>
<feature type="site" description="Transition state stabilizer" evidence="1">
    <location>
        <position position="506"/>
    </location>
</feature>
<gene>
    <name evidence="4" type="primary">shc1</name>
    <name type="ORF">SJAG_03360</name>
</gene>
<dbReference type="EC" id="4.2.1.129" evidence="6"/>
<dbReference type="EC" id="5.4.99.17" evidence="6"/>
<dbReference type="EMBL" id="KE651167">
    <property type="protein sequence ID" value="EEB08219.1"/>
    <property type="molecule type" value="Genomic_DNA"/>
</dbReference>
<dbReference type="RefSeq" id="XP_002174512.1">
    <property type="nucleotide sequence ID" value="XM_002174476.2"/>
</dbReference>
<dbReference type="SMR" id="B6K412"/>
<dbReference type="STRING" id="402676.B6K412"/>
<dbReference type="EnsemblFungi" id="EEB08219">
    <property type="protein sequence ID" value="EEB08219"/>
    <property type="gene ID" value="SJAG_03360"/>
</dbReference>
<dbReference type="GeneID" id="7050081"/>
<dbReference type="JaponicusDB" id="SJAG_03360"/>
<dbReference type="VEuPathDB" id="FungiDB:SJAG_03360"/>
<dbReference type="eggNOG" id="KOG0497">
    <property type="taxonomic scope" value="Eukaryota"/>
</dbReference>
<dbReference type="HOGENOM" id="CLU_019345_0_0_1"/>
<dbReference type="OMA" id="WILQHQE"/>
<dbReference type="OrthoDB" id="21502at2759"/>
<dbReference type="Proteomes" id="UP000001744">
    <property type="component" value="Unassembled WGS sequence"/>
</dbReference>
<dbReference type="GO" id="GO:0005811">
    <property type="term" value="C:lipid droplet"/>
    <property type="evidence" value="ECO:0007669"/>
    <property type="project" value="InterPro"/>
</dbReference>
<dbReference type="GO" id="GO:0016829">
    <property type="term" value="F:lyase activity"/>
    <property type="evidence" value="ECO:0007669"/>
    <property type="project" value="UniProtKB-KW"/>
</dbReference>
<dbReference type="GO" id="GO:0051007">
    <property type="term" value="F:squalene-hopene cyclase activity"/>
    <property type="evidence" value="ECO:0007669"/>
    <property type="project" value="RHEA"/>
</dbReference>
<dbReference type="GO" id="GO:0016104">
    <property type="term" value="P:triterpenoid biosynthetic process"/>
    <property type="evidence" value="ECO:0007669"/>
    <property type="project" value="InterPro"/>
</dbReference>
<dbReference type="CDD" id="cd02892">
    <property type="entry name" value="SQCY_1"/>
    <property type="match status" value="1"/>
</dbReference>
<dbReference type="Gene3D" id="1.50.10.20">
    <property type="match status" value="2"/>
</dbReference>
<dbReference type="InterPro" id="IPR006400">
    <property type="entry name" value="Hopene-cyclase"/>
</dbReference>
<dbReference type="InterPro" id="IPR032696">
    <property type="entry name" value="SQ_cyclase_C"/>
</dbReference>
<dbReference type="InterPro" id="IPR032697">
    <property type="entry name" value="SQ_cyclase_N"/>
</dbReference>
<dbReference type="InterPro" id="IPR018333">
    <property type="entry name" value="Squalene_cyclase"/>
</dbReference>
<dbReference type="InterPro" id="IPR008930">
    <property type="entry name" value="Terpenoid_cyclase/PrenylTrfase"/>
</dbReference>
<dbReference type="NCBIfam" id="TIGR01507">
    <property type="entry name" value="hopene_cyclase"/>
    <property type="match status" value="1"/>
</dbReference>
<dbReference type="NCBIfam" id="TIGR01787">
    <property type="entry name" value="squalene_cyclas"/>
    <property type="match status" value="1"/>
</dbReference>
<dbReference type="PANTHER" id="PTHR11764:SF20">
    <property type="entry name" value="LANOSTEROL SYNTHASE"/>
    <property type="match status" value="1"/>
</dbReference>
<dbReference type="PANTHER" id="PTHR11764">
    <property type="entry name" value="TERPENE CYCLASE/MUTASE FAMILY MEMBER"/>
    <property type="match status" value="1"/>
</dbReference>
<dbReference type="Pfam" id="PF13243">
    <property type="entry name" value="SQHop_cyclase_C"/>
    <property type="match status" value="1"/>
</dbReference>
<dbReference type="Pfam" id="PF13249">
    <property type="entry name" value="SQHop_cyclase_N"/>
    <property type="match status" value="1"/>
</dbReference>
<dbReference type="SFLD" id="SFLDG01016">
    <property type="entry name" value="Prenyltransferase_Like_2"/>
    <property type="match status" value="1"/>
</dbReference>
<dbReference type="SUPFAM" id="SSF48239">
    <property type="entry name" value="Terpenoid cyclases/Protein prenyltransferases"/>
    <property type="match status" value="2"/>
</dbReference>
<sequence length="656" mass="74242">MKTDGNTTLDTTISMEELERTVKSAYEALAKDQQDDGHWIYELEADVTIPAQFILLEHTLDKIDEELEQKIANYLRRCQSREHWGWPVYYGGEFNISASVQAYFALKMTGEDINAPHMVRAREAILAHGGPEYANVFTRIQLSLFGEASWLATPFMPVEIMLLPRWMYFSIWNMSYWSRTTVAPLLIVADLKPKAINPRNVHIPELFPTPPDKVKTWIHGPFRSKWGHVFKFIDTAIRPFTRFVPSFLHKKAYKAALDFIEPRLNGVDGLGAIYPPMSYSAVMYRALGIPDDDPRAATNWEALKGLLVIKEREAYCQACVSPVWDTALSGHALMEASFGPDGINADRTEKLIDRAAHWLRAHQVLNVVGDWAINNPNLQPGGWAFQYGNDYYPDVDDTAVAAMLLHRQNLPENEEALDRARKWIIGMQSSNGGWGAFDIDNDKQILNDIPFADHGALLDPPTADVSARCISLLAELGHPEDRPVIERGIKYLRKEQEEDGSWFGRWGTNYIYGAWSVLCAFNASGVPHDDPSVLKCVNFLKSVQREDGGWGESCETYEGSAHGVYTESLPSQTAWAVLGLMASGRRTDPAVKRGIVWLIQHQQDNGEWAEEPFNAVGFPRMFYLHYLGYKQFFPLLALARYRHMEKSGTNNVSFAF</sequence>
<organism>
    <name type="scientific">Schizosaccharomyces japonicus (strain yFS275 / FY16936)</name>
    <name type="common">Fission yeast</name>
    <dbReference type="NCBI Taxonomy" id="402676"/>
    <lineage>
        <taxon>Eukaryota</taxon>
        <taxon>Fungi</taxon>
        <taxon>Dikarya</taxon>
        <taxon>Ascomycota</taxon>
        <taxon>Taphrinomycotina</taxon>
        <taxon>Schizosaccharomycetes</taxon>
        <taxon>Schizosaccharomycetales</taxon>
        <taxon>Schizosaccharomycetaceae</taxon>
        <taxon>Schizosaccharomyces</taxon>
    </lineage>
</organism>
<name>SHC1_SCHJY</name>
<comment type="function">
    <text evidence="3">Squalene cyclase that catalyzes the oxygen-independent cyclization of squalene into hopanoids, a class of cyclic triterpenoids including hop-22(29)-ene, hop-17(21)-ene, hop-21(22)-ene, and hopan-22-ol.</text>
</comment>
<comment type="catalytic activity">
    <reaction evidence="6">
        <text>squalene = hop-22(29)-ene</text>
        <dbReference type="Rhea" id="RHEA:17637"/>
        <dbReference type="ChEBI" id="CHEBI:4648"/>
        <dbReference type="ChEBI" id="CHEBI:15440"/>
        <dbReference type="EC" id="5.4.99.17"/>
    </reaction>
    <physiologicalReaction direction="left-to-right" evidence="6">
        <dbReference type="Rhea" id="RHEA:17638"/>
    </physiologicalReaction>
</comment>
<comment type="catalytic activity">
    <reaction evidence="6">
        <text>squalene + H2O = hopan-22-ol</text>
        <dbReference type="Rhea" id="RHEA:16561"/>
        <dbReference type="ChEBI" id="CHEBI:15377"/>
        <dbReference type="ChEBI" id="CHEBI:15440"/>
        <dbReference type="ChEBI" id="CHEBI:36484"/>
        <dbReference type="EC" id="4.2.1.129"/>
    </reaction>
    <physiologicalReaction direction="left-to-right" evidence="6">
        <dbReference type="Rhea" id="RHEA:16562"/>
    </physiologicalReaction>
</comment>
<comment type="biotechnology">
    <text evidence="3">The fast anaerobic growth of Schizosaccharomyces japonicus in sterol-free media is an interesting trait for developing robust fungal cell factories for application in anaerobic industrial processes.</text>
</comment>
<comment type="similarity">
    <text evidence="5">Belongs to the terpene cyclase/mutase family.</text>
</comment>
<keyword id="KW-0413">Isomerase</keyword>
<keyword id="KW-0456">Lyase</keyword>
<keyword id="KW-1185">Reference proteome</keyword>
<keyword id="KW-0677">Repeat</keyword>
<protein>
    <recommendedName>
        <fullName evidence="4">Squalene-hopene cyclase</fullName>
        <shortName evidence="4">SHC</shortName>
        <ecNumber evidence="6">4.2.1.129</ecNumber>
        <ecNumber evidence="6">5.4.99.17</ecNumber>
    </recommendedName>
</protein>
<evidence type="ECO:0000250" key="1">
    <source>
        <dbReference type="UniProtKB" id="P48449"/>
    </source>
</evidence>
<evidence type="ECO:0000255" key="2"/>
<evidence type="ECO:0000269" key="3">
    <source>
    </source>
</evidence>
<evidence type="ECO:0000303" key="4">
    <source>
    </source>
</evidence>
<evidence type="ECO:0000305" key="5"/>
<evidence type="ECO:0000305" key="6">
    <source>
    </source>
</evidence>